<dbReference type="EMBL" id="AB007770">
    <property type="protein sequence ID" value="BAA76296.1"/>
    <property type="molecule type" value="Genomic_DNA"/>
</dbReference>
<dbReference type="EMBL" id="BA000053">
    <property type="protein sequence ID" value="BAE62710.1"/>
    <property type="status" value="ALT_SEQ"/>
    <property type="molecule type" value="Genomic_DNA"/>
</dbReference>
<dbReference type="PIR" id="T43894">
    <property type="entry name" value="T43894"/>
</dbReference>
<dbReference type="RefSeq" id="XP_001823843.2">
    <property type="nucleotide sequence ID" value="XM_001823791.2"/>
</dbReference>
<dbReference type="SMR" id="Q9Y713"/>
<dbReference type="STRING" id="510516.Q9Y713"/>
<dbReference type="EnsemblFungi" id="BAE62710">
    <property type="protein sequence ID" value="BAE62710"/>
    <property type="gene ID" value="AO090120000080"/>
</dbReference>
<dbReference type="GeneID" id="5996102"/>
<dbReference type="KEGG" id="aor:AO090120000080"/>
<dbReference type="VEuPathDB" id="FungiDB:AO090120000080"/>
<dbReference type="OMA" id="AIRDMGM"/>
<dbReference type="Proteomes" id="UP000006564">
    <property type="component" value="Chromosome 5"/>
</dbReference>
<dbReference type="GO" id="GO:0005737">
    <property type="term" value="C:cytoplasm"/>
    <property type="evidence" value="ECO:0007669"/>
    <property type="project" value="UniProtKB-SubCell"/>
</dbReference>
<dbReference type="GO" id="GO:0005525">
    <property type="term" value="F:GTP binding"/>
    <property type="evidence" value="ECO:0007669"/>
    <property type="project" value="UniProtKB-KW"/>
</dbReference>
<dbReference type="GO" id="GO:0003924">
    <property type="term" value="F:GTPase activity"/>
    <property type="evidence" value="ECO:0007669"/>
    <property type="project" value="InterPro"/>
</dbReference>
<dbReference type="GO" id="GO:0003746">
    <property type="term" value="F:translation elongation factor activity"/>
    <property type="evidence" value="ECO:0007669"/>
    <property type="project" value="UniProtKB-KW"/>
</dbReference>
<dbReference type="CDD" id="cd01883">
    <property type="entry name" value="EF1_alpha"/>
    <property type="match status" value="1"/>
</dbReference>
<dbReference type="CDD" id="cd03693">
    <property type="entry name" value="EF1_alpha_II"/>
    <property type="match status" value="1"/>
</dbReference>
<dbReference type="CDD" id="cd03705">
    <property type="entry name" value="EF1_alpha_III"/>
    <property type="match status" value="1"/>
</dbReference>
<dbReference type="FunFam" id="2.40.30.10:FF:000003">
    <property type="entry name" value="Elongation factor 1-alpha"/>
    <property type="match status" value="1"/>
</dbReference>
<dbReference type="FunFam" id="2.40.30.10:FF:000005">
    <property type="entry name" value="Elongation factor 1-alpha"/>
    <property type="match status" value="1"/>
</dbReference>
<dbReference type="FunFam" id="3.40.50.300:FF:000211">
    <property type="entry name" value="Elongation factor 1-alpha"/>
    <property type="match status" value="1"/>
</dbReference>
<dbReference type="Gene3D" id="3.40.50.300">
    <property type="entry name" value="P-loop containing nucleotide triphosphate hydrolases"/>
    <property type="match status" value="1"/>
</dbReference>
<dbReference type="Gene3D" id="2.40.30.10">
    <property type="entry name" value="Translation factors"/>
    <property type="match status" value="2"/>
</dbReference>
<dbReference type="HAMAP" id="MF_00118_A">
    <property type="entry name" value="EF_Tu_A"/>
    <property type="match status" value="1"/>
</dbReference>
<dbReference type="InterPro" id="IPR004161">
    <property type="entry name" value="EFTu-like_2"/>
</dbReference>
<dbReference type="InterPro" id="IPR031157">
    <property type="entry name" value="G_TR_CS"/>
</dbReference>
<dbReference type="InterPro" id="IPR054696">
    <property type="entry name" value="GTP-eEF1A_C"/>
</dbReference>
<dbReference type="InterPro" id="IPR027417">
    <property type="entry name" value="P-loop_NTPase"/>
</dbReference>
<dbReference type="InterPro" id="IPR000795">
    <property type="entry name" value="T_Tr_GTP-bd_dom"/>
</dbReference>
<dbReference type="InterPro" id="IPR050100">
    <property type="entry name" value="TRAFAC_GTPase_members"/>
</dbReference>
<dbReference type="InterPro" id="IPR009000">
    <property type="entry name" value="Transl_B-barrel_sf"/>
</dbReference>
<dbReference type="InterPro" id="IPR009001">
    <property type="entry name" value="Transl_elong_EF1A/Init_IF2_C"/>
</dbReference>
<dbReference type="InterPro" id="IPR004539">
    <property type="entry name" value="Transl_elong_EF1A_euk/arc"/>
</dbReference>
<dbReference type="NCBIfam" id="TIGR00483">
    <property type="entry name" value="EF-1_alpha"/>
    <property type="match status" value="1"/>
</dbReference>
<dbReference type="NCBIfam" id="NF008969">
    <property type="entry name" value="PRK12317.1"/>
    <property type="match status" value="1"/>
</dbReference>
<dbReference type="PANTHER" id="PTHR23115">
    <property type="entry name" value="TRANSLATION FACTOR"/>
    <property type="match status" value="1"/>
</dbReference>
<dbReference type="Pfam" id="PF22594">
    <property type="entry name" value="GTP-eEF1A_C"/>
    <property type="match status" value="1"/>
</dbReference>
<dbReference type="Pfam" id="PF00009">
    <property type="entry name" value="GTP_EFTU"/>
    <property type="match status" value="1"/>
</dbReference>
<dbReference type="Pfam" id="PF03144">
    <property type="entry name" value="GTP_EFTU_D2"/>
    <property type="match status" value="1"/>
</dbReference>
<dbReference type="PRINTS" id="PR00315">
    <property type="entry name" value="ELONGATNFCT"/>
</dbReference>
<dbReference type="SUPFAM" id="SSF50465">
    <property type="entry name" value="EF-Tu/eEF-1alpha/eIF2-gamma C-terminal domain"/>
    <property type="match status" value="1"/>
</dbReference>
<dbReference type="SUPFAM" id="SSF52540">
    <property type="entry name" value="P-loop containing nucleoside triphosphate hydrolases"/>
    <property type="match status" value="1"/>
</dbReference>
<dbReference type="SUPFAM" id="SSF50447">
    <property type="entry name" value="Translation proteins"/>
    <property type="match status" value="1"/>
</dbReference>
<dbReference type="PROSITE" id="PS00301">
    <property type="entry name" value="G_TR_1"/>
    <property type="match status" value="1"/>
</dbReference>
<dbReference type="PROSITE" id="PS51722">
    <property type="entry name" value="G_TR_2"/>
    <property type="match status" value="1"/>
</dbReference>
<proteinExistence type="inferred from homology"/>
<sequence length="460" mass="50067">MGKEDKQHINIVVIGHVDSGKSTTTGHLIYKCGGIDQRTIEKFEKEAAELGKGSFKYAWVLDKLKSERERGITIDIALWKFQTSKYEVTVIDAPGHRDFIKNMITGTSQADCAILIIASGTGEFEAGISKDGQTREHALLAFTLGVRQLIVALNKMDTCKWSQDRYNEIVKETSNFIKKVGYNPKSVPFVPISGFNGDNMIEASTNCPWYKGWEKETKAGKSTGKTLLEAIDAIEPPVRPTDKPLRLPLQDVYKISGIGTVPVGRVETGVIKPGMVVTFAPANVTTEVKSVEMHHQQLQAGNPGDNVGFNVKNVSVKEVRRGNVAGDSKNDPPAGCDSFNAQVIVLNHPGQVGNGYAPVLDCHTAHIACKFAELLEKIDRRTGKSVEDKPKFIKSGDAAIVKMIPSKPMCVESFTDFPPLGRFAVRDMRQTVAVGVIKSVEKNTGGSGKVTKAAQKAGKK</sequence>
<reference key="1">
    <citation type="journal article" date="1998" name="Appl. Microbiol. Biotechnol.">
        <title>Utilization of the TEF1-alpha gene (TEF1) promoter for expression of polygalacturonase genes, pgaA and pgaB, in Aspergillus oryzae.</title>
        <authorList>
            <person name="Kitamoto N."/>
            <person name="Matsui J."/>
            <person name="Kawai Y."/>
            <person name="Kato A."/>
            <person name="Yoshino S."/>
            <person name="Ohmiya K."/>
            <person name="Tsukagoshi N."/>
        </authorList>
    </citation>
    <scope>NUCLEOTIDE SEQUENCE [GENOMIC DNA]</scope>
    <source>
        <strain>KBN616</strain>
    </source>
</reference>
<reference key="2">
    <citation type="journal article" date="2005" name="Nature">
        <title>Genome sequencing and analysis of Aspergillus oryzae.</title>
        <authorList>
            <person name="Machida M."/>
            <person name="Asai K."/>
            <person name="Sano M."/>
            <person name="Tanaka T."/>
            <person name="Kumagai T."/>
            <person name="Terai G."/>
            <person name="Kusumoto K."/>
            <person name="Arima T."/>
            <person name="Akita O."/>
            <person name="Kashiwagi Y."/>
            <person name="Abe K."/>
            <person name="Gomi K."/>
            <person name="Horiuchi H."/>
            <person name="Kitamoto K."/>
            <person name="Kobayashi T."/>
            <person name="Takeuchi M."/>
            <person name="Denning D.W."/>
            <person name="Galagan J.E."/>
            <person name="Nierman W.C."/>
            <person name="Yu J."/>
            <person name="Archer D.B."/>
            <person name="Bennett J.W."/>
            <person name="Bhatnagar D."/>
            <person name="Cleveland T.E."/>
            <person name="Fedorova N.D."/>
            <person name="Gotoh O."/>
            <person name="Horikawa H."/>
            <person name="Hosoyama A."/>
            <person name="Ichinomiya M."/>
            <person name="Igarashi R."/>
            <person name="Iwashita K."/>
            <person name="Juvvadi P.R."/>
            <person name="Kato M."/>
            <person name="Kato Y."/>
            <person name="Kin T."/>
            <person name="Kokubun A."/>
            <person name="Maeda H."/>
            <person name="Maeyama N."/>
            <person name="Maruyama J."/>
            <person name="Nagasaki H."/>
            <person name="Nakajima T."/>
            <person name="Oda K."/>
            <person name="Okada K."/>
            <person name="Paulsen I."/>
            <person name="Sakamoto K."/>
            <person name="Sawano T."/>
            <person name="Takahashi M."/>
            <person name="Takase K."/>
            <person name="Terabayashi Y."/>
            <person name="Wortman J.R."/>
            <person name="Yamada O."/>
            <person name="Yamagata Y."/>
            <person name="Anazawa H."/>
            <person name="Hata Y."/>
            <person name="Koide Y."/>
            <person name="Komori T."/>
            <person name="Koyama Y."/>
            <person name="Minetoki T."/>
            <person name="Suharnan S."/>
            <person name="Tanaka A."/>
            <person name="Isono K."/>
            <person name="Kuhara S."/>
            <person name="Ogasawara N."/>
            <person name="Kikuchi H."/>
        </authorList>
    </citation>
    <scope>NUCLEOTIDE SEQUENCE [LARGE SCALE GENOMIC DNA]</scope>
    <source>
        <strain>ATCC 42149 / RIB 40</strain>
    </source>
</reference>
<evidence type="ECO:0000250" key="1"/>
<evidence type="ECO:0000250" key="2">
    <source>
        <dbReference type="UniProtKB" id="P02994"/>
    </source>
</evidence>
<evidence type="ECO:0000305" key="3"/>
<comment type="function">
    <text>This protein promotes the GTP-dependent binding of aminoacyl-tRNA to the A-site of ribosomes during protein biosynthesis.</text>
</comment>
<comment type="subcellular location">
    <subcellularLocation>
        <location>Cytoplasm</location>
    </subcellularLocation>
</comment>
<comment type="similarity">
    <text evidence="3">Belongs to the TRAFAC class translation factor GTPase superfamily. Classic translation factor GTPase family. EF-Tu/EF-1A subfamily.</text>
</comment>
<comment type="sequence caution" evidence="3">
    <conflict type="erroneous gene model prediction">
        <sequence resource="EMBL-CDS" id="BAE62710"/>
    </conflict>
</comment>
<name>EF1A_ASPOR</name>
<feature type="initiator methionine" description="Removed" evidence="2">
    <location>
        <position position="1"/>
    </location>
</feature>
<feature type="chain" id="PRO_0000090953" description="Elongation factor 1-alpha">
    <location>
        <begin position="2"/>
        <end position="460"/>
    </location>
</feature>
<feature type="domain" description="tr-type G">
    <location>
        <begin position="6"/>
        <end position="241"/>
    </location>
</feature>
<feature type="region of interest" description="G1" evidence="1">
    <location>
        <begin position="15"/>
        <end position="22"/>
    </location>
</feature>
<feature type="region of interest" description="G2" evidence="1">
    <location>
        <begin position="71"/>
        <end position="75"/>
    </location>
</feature>
<feature type="region of interest" description="G3" evidence="1">
    <location>
        <begin position="92"/>
        <end position="95"/>
    </location>
</feature>
<feature type="region of interest" description="G4" evidence="1">
    <location>
        <begin position="154"/>
        <end position="157"/>
    </location>
</feature>
<feature type="region of interest" description="G5" evidence="1">
    <location>
        <begin position="193"/>
        <end position="195"/>
    </location>
</feature>
<feature type="binding site" evidence="1">
    <location>
        <begin position="15"/>
        <end position="22"/>
    </location>
    <ligand>
        <name>GTP</name>
        <dbReference type="ChEBI" id="CHEBI:37565"/>
    </ligand>
</feature>
<feature type="binding site" evidence="1">
    <location>
        <begin position="92"/>
        <end position="96"/>
    </location>
    <ligand>
        <name>GTP</name>
        <dbReference type="ChEBI" id="CHEBI:37565"/>
    </ligand>
</feature>
<feature type="binding site" evidence="1">
    <location>
        <begin position="154"/>
        <end position="157"/>
    </location>
    <ligand>
        <name>GTP</name>
        <dbReference type="ChEBI" id="CHEBI:37565"/>
    </ligand>
</feature>
<feature type="modified residue" description="N,N,N-trimethylglycine" evidence="2">
    <location>
        <position position="2"/>
    </location>
</feature>
<feature type="modified residue" description="N6,N6-dimethyllysine; alternate" evidence="2">
    <location>
        <position position="3"/>
    </location>
</feature>
<feature type="modified residue" description="N6-methyllysine; alternate" evidence="2">
    <location>
        <position position="3"/>
    </location>
</feature>
<feature type="modified residue" description="N6-methyllysine" evidence="2">
    <location>
        <position position="31"/>
    </location>
</feature>
<feature type="modified residue" description="N6,N6,N6-trimethyllysine" evidence="2">
    <location>
        <position position="80"/>
    </location>
</feature>
<feature type="modified residue" description="N6,N6-dimethyllysine; alternate" evidence="2">
    <location>
        <position position="317"/>
    </location>
</feature>
<feature type="modified residue" description="N6-methyllysine; alternate" evidence="2">
    <location>
        <position position="317"/>
    </location>
</feature>
<feature type="modified residue" description="N6-methyllysine" evidence="2">
    <location>
        <position position="391"/>
    </location>
</feature>
<protein>
    <recommendedName>
        <fullName>Elongation factor 1-alpha</fullName>
        <shortName>EF-1-alpha</shortName>
    </recommendedName>
</protein>
<gene>
    <name type="primary">tef1</name>
    <name type="synonym">tef</name>
    <name type="ORF">AO090120000080</name>
</gene>
<organism>
    <name type="scientific">Aspergillus oryzae (strain ATCC 42149 / RIB 40)</name>
    <name type="common">Yellow koji mold</name>
    <dbReference type="NCBI Taxonomy" id="510516"/>
    <lineage>
        <taxon>Eukaryota</taxon>
        <taxon>Fungi</taxon>
        <taxon>Dikarya</taxon>
        <taxon>Ascomycota</taxon>
        <taxon>Pezizomycotina</taxon>
        <taxon>Eurotiomycetes</taxon>
        <taxon>Eurotiomycetidae</taxon>
        <taxon>Eurotiales</taxon>
        <taxon>Aspergillaceae</taxon>
        <taxon>Aspergillus</taxon>
        <taxon>Aspergillus subgen. Circumdati</taxon>
    </lineage>
</organism>
<keyword id="KW-0963">Cytoplasm</keyword>
<keyword id="KW-0251">Elongation factor</keyword>
<keyword id="KW-0342">GTP-binding</keyword>
<keyword id="KW-0488">Methylation</keyword>
<keyword id="KW-0547">Nucleotide-binding</keyword>
<keyword id="KW-0648">Protein biosynthesis</keyword>
<keyword id="KW-1185">Reference proteome</keyword>
<accession>Q9Y713</accession>
<accession>Q2U6V5</accession>